<name>RK32_CUCSA</name>
<accession>Q2QD42</accession>
<accession>Q4VZM0</accession>
<feature type="chain" id="PRO_0000276465" description="Large ribosomal subunit protein bL32c">
    <location>
        <begin position="1"/>
        <end position="54"/>
    </location>
</feature>
<feature type="sequence conflict" description="In Ref. 2; CAJ00807." evidence="2" ref="2">
    <original>V</original>
    <variation>L</variation>
    <location>
        <position position="3"/>
    </location>
</feature>
<feature type="sequence conflict" description="In Ref. 2; CAJ00807." evidence="2" ref="2">
    <original>L</original>
    <variation>P</variation>
    <location>
        <position position="34"/>
    </location>
</feature>
<evidence type="ECO:0000255" key="1">
    <source>
        <dbReference type="HAMAP-Rule" id="MF_00340"/>
    </source>
</evidence>
<evidence type="ECO:0000305" key="2"/>
<gene>
    <name evidence="1" type="primary">rpl32</name>
    <name type="ordered locus">CsCp102</name>
</gene>
<proteinExistence type="inferred from homology"/>
<dbReference type="EMBL" id="DQ119058">
    <property type="protein sequence ID" value="AAZ94697.1"/>
    <property type="molecule type" value="Genomic_DNA"/>
</dbReference>
<dbReference type="EMBL" id="AJ970307">
    <property type="protein sequence ID" value="CAJ00807.1"/>
    <property type="molecule type" value="Genomic_DNA"/>
</dbReference>
<dbReference type="EMBL" id="DQ865975">
    <property type="status" value="NOT_ANNOTATED_CDS"/>
    <property type="molecule type" value="Genomic_DNA"/>
</dbReference>
<dbReference type="EMBL" id="DQ865976">
    <property type="status" value="NOT_ANNOTATED_CDS"/>
    <property type="molecule type" value="Genomic_DNA"/>
</dbReference>
<dbReference type="RefSeq" id="YP_247648.1">
    <property type="nucleotide sequence ID" value="NC_007144.1"/>
</dbReference>
<dbReference type="SMR" id="Q2QD42"/>
<dbReference type="GeneID" id="3429298"/>
<dbReference type="KEGG" id="csv:3429298"/>
<dbReference type="OrthoDB" id="1718206at2759"/>
<dbReference type="GO" id="GO:0009507">
    <property type="term" value="C:chloroplast"/>
    <property type="evidence" value="ECO:0007669"/>
    <property type="project" value="UniProtKB-SubCell"/>
</dbReference>
<dbReference type="GO" id="GO:0015934">
    <property type="term" value="C:large ribosomal subunit"/>
    <property type="evidence" value="ECO:0007669"/>
    <property type="project" value="InterPro"/>
</dbReference>
<dbReference type="GO" id="GO:0003735">
    <property type="term" value="F:structural constituent of ribosome"/>
    <property type="evidence" value="ECO:0007669"/>
    <property type="project" value="InterPro"/>
</dbReference>
<dbReference type="GO" id="GO:0006412">
    <property type="term" value="P:translation"/>
    <property type="evidence" value="ECO:0007669"/>
    <property type="project" value="UniProtKB-UniRule"/>
</dbReference>
<dbReference type="HAMAP" id="MF_00340">
    <property type="entry name" value="Ribosomal_bL32"/>
    <property type="match status" value="1"/>
</dbReference>
<dbReference type="InterPro" id="IPR002677">
    <property type="entry name" value="Ribosomal_bL32"/>
</dbReference>
<dbReference type="InterPro" id="IPR044958">
    <property type="entry name" value="Ribosomal_bL32_plant/cyanobact"/>
</dbReference>
<dbReference type="InterPro" id="IPR011332">
    <property type="entry name" value="Ribosomal_zn-bd"/>
</dbReference>
<dbReference type="PANTHER" id="PTHR36083">
    <property type="entry name" value="50S RIBOSOMAL PROTEIN L32, CHLOROPLASTIC"/>
    <property type="match status" value="1"/>
</dbReference>
<dbReference type="PANTHER" id="PTHR36083:SF1">
    <property type="entry name" value="LARGE RIBOSOMAL SUBUNIT PROTEIN BL32C"/>
    <property type="match status" value="1"/>
</dbReference>
<dbReference type="Pfam" id="PF01783">
    <property type="entry name" value="Ribosomal_L32p"/>
    <property type="match status" value="1"/>
</dbReference>
<dbReference type="SUPFAM" id="SSF57829">
    <property type="entry name" value="Zn-binding ribosomal proteins"/>
    <property type="match status" value="1"/>
</dbReference>
<sequence>MAVPKKRTSISKKRIRKNIWKSKGRRAALKAFSLAKSLSTGNSKSFWGDKSNKY</sequence>
<comment type="subcellular location">
    <subcellularLocation>
        <location>Plastid</location>
        <location>Chloroplast</location>
    </subcellularLocation>
</comment>
<comment type="similarity">
    <text evidence="1">Belongs to the bacterial ribosomal protein bL32 family.</text>
</comment>
<organism>
    <name type="scientific">Cucumis sativus</name>
    <name type="common">Cucumber</name>
    <dbReference type="NCBI Taxonomy" id="3659"/>
    <lineage>
        <taxon>Eukaryota</taxon>
        <taxon>Viridiplantae</taxon>
        <taxon>Streptophyta</taxon>
        <taxon>Embryophyta</taxon>
        <taxon>Tracheophyta</taxon>
        <taxon>Spermatophyta</taxon>
        <taxon>Magnoliopsida</taxon>
        <taxon>eudicotyledons</taxon>
        <taxon>Gunneridae</taxon>
        <taxon>Pentapetalae</taxon>
        <taxon>rosids</taxon>
        <taxon>fabids</taxon>
        <taxon>Cucurbitales</taxon>
        <taxon>Cucurbitaceae</taxon>
        <taxon>Benincaseae</taxon>
        <taxon>Cucumis</taxon>
    </lineage>
</organism>
<protein>
    <recommendedName>
        <fullName evidence="1">Large ribosomal subunit protein bL32c</fullName>
    </recommendedName>
    <alternativeName>
        <fullName evidence="2">50S ribosomal protein L32, chloroplastic</fullName>
    </alternativeName>
</protein>
<geneLocation type="chloroplast"/>
<reference key="1">
    <citation type="journal article" date="2006" name="Plant Cell Rep.">
        <title>Complete sequence and organization of the cucumber (Cucumis sativus L. cv. Baekmibaekdadagi) chloroplast genome.</title>
        <authorList>
            <person name="Kim J.-S."/>
            <person name="Jung J.D."/>
            <person name="Lee J.-A."/>
            <person name="Park H.-W."/>
            <person name="Oh K.-H."/>
            <person name="Jeong W.J."/>
            <person name="Choi D.-W."/>
            <person name="Liu J.R."/>
            <person name="Cho K.Y."/>
        </authorList>
    </citation>
    <scope>NUCLEOTIDE SEQUENCE [LARGE SCALE GENOMIC DNA]</scope>
    <source>
        <strain>cv. Baekmibaekdadagi</strain>
    </source>
</reference>
<reference key="2">
    <citation type="journal article" date="2007" name="Cell. Mol. Biol. Lett.">
        <title>The complete structure of the cucumber (Cucumis sativus L.) chloroplast genome: its composition and comparative analysis.</title>
        <authorList>
            <person name="Plader W.W."/>
            <person name="Yukawa Y."/>
            <person name="Sugiura M."/>
            <person name="Malepszy S."/>
        </authorList>
    </citation>
    <scope>NUCLEOTIDE SEQUENCE [LARGE SCALE GENOMIC DNA]</scope>
    <source>
        <strain>cv. Borszczagowski</strain>
    </source>
</reference>
<reference key="3">
    <citation type="journal article" date="2007" name="Genome">
        <title>Sequencing cucumber (Cucumis sativus L.) chloroplast genomes identifies differences between chilling-tolerant and -susceptible cucumber lines.</title>
        <authorList>
            <person name="Chung S.-M."/>
            <person name="Gordon V.S."/>
            <person name="Staub J.E."/>
        </authorList>
    </citation>
    <scope>NUCLEOTIDE SEQUENCE [LARGE SCALE GENOMIC DNA]</scope>
    <source>
        <strain>cv. Chipper</strain>
        <strain>cv. Gy14</strain>
    </source>
</reference>
<keyword id="KW-0150">Chloroplast</keyword>
<keyword id="KW-0934">Plastid</keyword>
<keyword id="KW-0687">Ribonucleoprotein</keyword>
<keyword id="KW-0689">Ribosomal protein</keyword>